<evidence type="ECO:0000255" key="1">
    <source>
        <dbReference type="HAMAP-Rule" id="MF_00451"/>
    </source>
</evidence>
<feature type="chain" id="PRO_1000026221" description="Nucleoside diphosphate kinase">
    <location>
        <begin position="1"/>
        <end position="137"/>
    </location>
</feature>
<feature type="active site" description="Pros-phosphohistidine intermediate" evidence="1">
    <location>
        <position position="115"/>
    </location>
</feature>
<feature type="binding site" evidence="1">
    <location>
        <position position="9"/>
    </location>
    <ligand>
        <name>ATP</name>
        <dbReference type="ChEBI" id="CHEBI:30616"/>
    </ligand>
</feature>
<feature type="binding site" evidence="1">
    <location>
        <position position="57"/>
    </location>
    <ligand>
        <name>ATP</name>
        <dbReference type="ChEBI" id="CHEBI:30616"/>
    </ligand>
</feature>
<feature type="binding site" evidence="1">
    <location>
        <position position="85"/>
    </location>
    <ligand>
        <name>ATP</name>
        <dbReference type="ChEBI" id="CHEBI:30616"/>
    </ligand>
</feature>
<feature type="binding site" evidence="1">
    <location>
        <position position="91"/>
    </location>
    <ligand>
        <name>ATP</name>
        <dbReference type="ChEBI" id="CHEBI:30616"/>
    </ligand>
</feature>
<feature type="binding site" evidence="1">
    <location>
        <position position="102"/>
    </location>
    <ligand>
        <name>ATP</name>
        <dbReference type="ChEBI" id="CHEBI:30616"/>
    </ligand>
</feature>
<feature type="binding site" evidence="1">
    <location>
        <position position="112"/>
    </location>
    <ligand>
        <name>ATP</name>
        <dbReference type="ChEBI" id="CHEBI:30616"/>
    </ligand>
</feature>
<proteinExistence type="inferred from homology"/>
<keyword id="KW-0067">ATP-binding</keyword>
<keyword id="KW-0963">Cytoplasm</keyword>
<keyword id="KW-0418">Kinase</keyword>
<keyword id="KW-0460">Magnesium</keyword>
<keyword id="KW-0479">Metal-binding</keyword>
<keyword id="KW-0546">Nucleotide metabolism</keyword>
<keyword id="KW-0547">Nucleotide-binding</keyword>
<keyword id="KW-0597">Phosphoprotein</keyword>
<keyword id="KW-1185">Reference proteome</keyword>
<keyword id="KW-0808">Transferase</keyword>
<dbReference type="EC" id="2.7.4.6" evidence="1"/>
<dbReference type="EMBL" id="CP000767">
    <property type="protein sequence ID" value="EAU01063.1"/>
    <property type="molecule type" value="Genomic_DNA"/>
</dbReference>
<dbReference type="RefSeq" id="WP_009650810.1">
    <property type="nucleotide sequence ID" value="NC_009715.2"/>
</dbReference>
<dbReference type="SMR" id="A7H051"/>
<dbReference type="STRING" id="360105.CCV52592_1702"/>
<dbReference type="GeneID" id="61002822"/>
<dbReference type="KEGG" id="ccv:CCV52592_1702"/>
<dbReference type="HOGENOM" id="CLU_060216_8_1_7"/>
<dbReference type="OrthoDB" id="9801161at2"/>
<dbReference type="Proteomes" id="UP000006380">
    <property type="component" value="Chromosome"/>
</dbReference>
<dbReference type="GO" id="GO:0005737">
    <property type="term" value="C:cytoplasm"/>
    <property type="evidence" value="ECO:0007669"/>
    <property type="project" value="UniProtKB-SubCell"/>
</dbReference>
<dbReference type="GO" id="GO:0005524">
    <property type="term" value="F:ATP binding"/>
    <property type="evidence" value="ECO:0007669"/>
    <property type="project" value="UniProtKB-UniRule"/>
</dbReference>
<dbReference type="GO" id="GO:0046872">
    <property type="term" value="F:metal ion binding"/>
    <property type="evidence" value="ECO:0007669"/>
    <property type="project" value="UniProtKB-KW"/>
</dbReference>
<dbReference type="GO" id="GO:0004550">
    <property type="term" value="F:nucleoside diphosphate kinase activity"/>
    <property type="evidence" value="ECO:0007669"/>
    <property type="project" value="UniProtKB-UniRule"/>
</dbReference>
<dbReference type="GO" id="GO:0006241">
    <property type="term" value="P:CTP biosynthetic process"/>
    <property type="evidence" value="ECO:0007669"/>
    <property type="project" value="UniProtKB-UniRule"/>
</dbReference>
<dbReference type="GO" id="GO:0006183">
    <property type="term" value="P:GTP biosynthetic process"/>
    <property type="evidence" value="ECO:0007669"/>
    <property type="project" value="UniProtKB-UniRule"/>
</dbReference>
<dbReference type="GO" id="GO:0006228">
    <property type="term" value="P:UTP biosynthetic process"/>
    <property type="evidence" value="ECO:0007669"/>
    <property type="project" value="UniProtKB-UniRule"/>
</dbReference>
<dbReference type="CDD" id="cd04413">
    <property type="entry name" value="NDPk_I"/>
    <property type="match status" value="1"/>
</dbReference>
<dbReference type="FunFam" id="3.30.70.141:FF:000001">
    <property type="entry name" value="Nucleoside diphosphate kinase"/>
    <property type="match status" value="1"/>
</dbReference>
<dbReference type="Gene3D" id="3.30.70.141">
    <property type="entry name" value="Nucleoside diphosphate kinase-like domain"/>
    <property type="match status" value="1"/>
</dbReference>
<dbReference type="HAMAP" id="MF_00451">
    <property type="entry name" value="NDP_kinase"/>
    <property type="match status" value="1"/>
</dbReference>
<dbReference type="InterPro" id="IPR034907">
    <property type="entry name" value="NDK-like_dom"/>
</dbReference>
<dbReference type="InterPro" id="IPR036850">
    <property type="entry name" value="NDK-like_dom_sf"/>
</dbReference>
<dbReference type="InterPro" id="IPR001564">
    <property type="entry name" value="Nucleoside_diP_kinase"/>
</dbReference>
<dbReference type="InterPro" id="IPR023005">
    <property type="entry name" value="Nucleoside_diP_kinase_AS"/>
</dbReference>
<dbReference type="NCBIfam" id="NF001908">
    <property type="entry name" value="PRK00668.1"/>
    <property type="match status" value="1"/>
</dbReference>
<dbReference type="PANTHER" id="PTHR46161">
    <property type="entry name" value="NUCLEOSIDE DIPHOSPHATE KINASE"/>
    <property type="match status" value="1"/>
</dbReference>
<dbReference type="PANTHER" id="PTHR46161:SF3">
    <property type="entry name" value="NUCLEOSIDE DIPHOSPHATE KINASE DDB_G0292928-RELATED"/>
    <property type="match status" value="1"/>
</dbReference>
<dbReference type="Pfam" id="PF00334">
    <property type="entry name" value="NDK"/>
    <property type="match status" value="1"/>
</dbReference>
<dbReference type="PRINTS" id="PR01243">
    <property type="entry name" value="NUCDPKINASE"/>
</dbReference>
<dbReference type="SMART" id="SM00562">
    <property type="entry name" value="NDK"/>
    <property type="match status" value="1"/>
</dbReference>
<dbReference type="SUPFAM" id="SSF54919">
    <property type="entry name" value="Nucleoside diphosphate kinase, NDK"/>
    <property type="match status" value="1"/>
</dbReference>
<dbReference type="PROSITE" id="PS00469">
    <property type="entry name" value="NDPK"/>
    <property type="match status" value="1"/>
</dbReference>
<dbReference type="PROSITE" id="PS51374">
    <property type="entry name" value="NDPK_LIKE"/>
    <property type="match status" value="1"/>
</dbReference>
<comment type="function">
    <text evidence="1">Major role in the synthesis of nucleoside triphosphates other than ATP. The ATP gamma phosphate is transferred to the NDP beta phosphate via a ping-pong mechanism, using a phosphorylated active-site intermediate.</text>
</comment>
<comment type="catalytic activity">
    <reaction evidence="1">
        <text>a 2'-deoxyribonucleoside 5'-diphosphate + ATP = a 2'-deoxyribonucleoside 5'-triphosphate + ADP</text>
        <dbReference type="Rhea" id="RHEA:44640"/>
        <dbReference type="ChEBI" id="CHEBI:30616"/>
        <dbReference type="ChEBI" id="CHEBI:61560"/>
        <dbReference type="ChEBI" id="CHEBI:73316"/>
        <dbReference type="ChEBI" id="CHEBI:456216"/>
        <dbReference type="EC" id="2.7.4.6"/>
    </reaction>
</comment>
<comment type="catalytic activity">
    <reaction evidence="1">
        <text>a ribonucleoside 5'-diphosphate + ATP = a ribonucleoside 5'-triphosphate + ADP</text>
        <dbReference type="Rhea" id="RHEA:18113"/>
        <dbReference type="ChEBI" id="CHEBI:30616"/>
        <dbReference type="ChEBI" id="CHEBI:57930"/>
        <dbReference type="ChEBI" id="CHEBI:61557"/>
        <dbReference type="ChEBI" id="CHEBI:456216"/>
        <dbReference type="EC" id="2.7.4.6"/>
    </reaction>
</comment>
<comment type="cofactor">
    <cofactor evidence="1">
        <name>Mg(2+)</name>
        <dbReference type="ChEBI" id="CHEBI:18420"/>
    </cofactor>
</comment>
<comment type="subunit">
    <text evidence="1">Homotetramer.</text>
</comment>
<comment type="subcellular location">
    <subcellularLocation>
        <location evidence="1">Cytoplasm</location>
    </subcellularLocation>
</comment>
<comment type="similarity">
    <text evidence="1">Belongs to the NDK family.</text>
</comment>
<accession>A7H051</accession>
<sequence length="137" mass="14933">MQRTLSIIKPDAVKKNVVGKIIDRFESNGLRIAAAKKVKLSKCDAKAFYAVHSERPFFNDLVEFMTSGPVVVMVLEGENAVAKNRELMGATNPKEAAAGTIRADFAESIDANAVHGSDSLENAINEINFFFAAREIC</sequence>
<reference key="1">
    <citation type="submission" date="2007-07" db="EMBL/GenBank/DDBJ databases">
        <title>Genome sequence of Campylobacter curvus 525.92 isolated from human feces.</title>
        <authorList>
            <person name="Fouts D.E."/>
            <person name="Mongodin E.F."/>
            <person name="Puiu D."/>
            <person name="Sebastian Y."/>
            <person name="Miller W.G."/>
            <person name="Mandrell R.E."/>
            <person name="Lastovica A.J."/>
            <person name="Nelson K.E."/>
        </authorList>
    </citation>
    <scope>NUCLEOTIDE SEQUENCE [LARGE SCALE GENOMIC DNA]</scope>
    <source>
        <strain>525.92</strain>
    </source>
</reference>
<gene>
    <name evidence="1" type="primary">ndk</name>
    <name type="ordered locus">Ccur92_15390</name>
    <name type="ORF">CCV52592_1702</name>
</gene>
<name>NDK_CAMC5</name>
<protein>
    <recommendedName>
        <fullName evidence="1">Nucleoside diphosphate kinase</fullName>
        <shortName evidence="1">NDK</shortName>
        <shortName evidence="1">NDP kinase</shortName>
        <ecNumber evidence="1">2.7.4.6</ecNumber>
    </recommendedName>
    <alternativeName>
        <fullName evidence="1">Nucleoside-2-P kinase</fullName>
    </alternativeName>
</protein>
<organism>
    <name type="scientific">Campylobacter curvus (strain 525.92)</name>
    <dbReference type="NCBI Taxonomy" id="360105"/>
    <lineage>
        <taxon>Bacteria</taxon>
        <taxon>Pseudomonadati</taxon>
        <taxon>Campylobacterota</taxon>
        <taxon>Epsilonproteobacteria</taxon>
        <taxon>Campylobacterales</taxon>
        <taxon>Campylobacteraceae</taxon>
        <taxon>Campylobacter</taxon>
    </lineage>
</organism>